<accession>B5XNL6</accession>
<name>SYH_KLEP3</name>
<evidence type="ECO:0000255" key="1">
    <source>
        <dbReference type="HAMAP-Rule" id="MF_00127"/>
    </source>
</evidence>
<proteinExistence type="inferred from homology"/>
<gene>
    <name evidence="1" type="primary">hisS</name>
    <name type="ordered locus">KPK_1276</name>
</gene>
<sequence>MAKNIQAIRGMNDYLPGETALWQRIEGSLKQVLGSYGYSEIRLPIVEQTPLFKRAIGEVTDVVEKEMYTFEDRNGDSLTLRPEGTAGCVRAGIEHGLLYNQEQRLWYVGPMFRHERPQKGRYRQFHQIGAEVFGLQGPDIDAELIMLTARWWRELGISDHVSLELNSIGSLEARANYRDALVAYLEQFTDKLDEDSKRRMYTNPLRVLDSKNPDVQALLNDAPALGDYLDEESKAHFAGLCALLDDAGIRYTVNQRLVRGLDYYNRTVFEWVTTSLGSQGTVCAGGRYDGLVEQLGGRATPGVGFAMGLERLVLLVQAVNPEFKADPVVDIYLVASGTDTQSAAMRLAEQVRDALPGVKLMTNHGGGNFKKQFARADKWGARIALVVGESEIADGNVVVKDLRSGEQTTVTQESVAAHLRTLLG</sequence>
<comment type="catalytic activity">
    <reaction evidence="1">
        <text>tRNA(His) + L-histidine + ATP = L-histidyl-tRNA(His) + AMP + diphosphate + H(+)</text>
        <dbReference type="Rhea" id="RHEA:17313"/>
        <dbReference type="Rhea" id="RHEA-COMP:9665"/>
        <dbReference type="Rhea" id="RHEA-COMP:9689"/>
        <dbReference type="ChEBI" id="CHEBI:15378"/>
        <dbReference type="ChEBI" id="CHEBI:30616"/>
        <dbReference type="ChEBI" id="CHEBI:33019"/>
        <dbReference type="ChEBI" id="CHEBI:57595"/>
        <dbReference type="ChEBI" id="CHEBI:78442"/>
        <dbReference type="ChEBI" id="CHEBI:78527"/>
        <dbReference type="ChEBI" id="CHEBI:456215"/>
        <dbReference type="EC" id="6.1.1.21"/>
    </reaction>
</comment>
<comment type="subunit">
    <text evidence="1">Homodimer.</text>
</comment>
<comment type="subcellular location">
    <subcellularLocation>
        <location evidence="1">Cytoplasm</location>
    </subcellularLocation>
</comment>
<comment type="similarity">
    <text evidence="1">Belongs to the class-II aminoacyl-tRNA synthetase family.</text>
</comment>
<dbReference type="EC" id="6.1.1.21" evidence="1"/>
<dbReference type="EMBL" id="CP000964">
    <property type="protein sequence ID" value="ACI11587.1"/>
    <property type="molecule type" value="Genomic_DNA"/>
</dbReference>
<dbReference type="SMR" id="B5XNL6"/>
<dbReference type="KEGG" id="kpe:KPK_1276"/>
<dbReference type="HOGENOM" id="CLU_025113_1_1_6"/>
<dbReference type="Proteomes" id="UP000001734">
    <property type="component" value="Chromosome"/>
</dbReference>
<dbReference type="GO" id="GO:0005737">
    <property type="term" value="C:cytoplasm"/>
    <property type="evidence" value="ECO:0007669"/>
    <property type="project" value="UniProtKB-SubCell"/>
</dbReference>
<dbReference type="GO" id="GO:0005524">
    <property type="term" value="F:ATP binding"/>
    <property type="evidence" value="ECO:0007669"/>
    <property type="project" value="UniProtKB-UniRule"/>
</dbReference>
<dbReference type="GO" id="GO:0004821">
    <property type="term" value="F:histidine-tRNA ligase activity"/>
    <property type="evidence" value="ECO:0007669"/>
    <property type="project" value="UniProtKB-UniRule"/>
</dbReference>
<dbReference type="GO" id="GO:0006427">
    <property type="term" value="P:histidyl-tRNA aminoacylation"/>
    <property type="evidence" value="ECO:0007669"/>
    <property type="project" value="UniProtKB-UniRule"/>
</dbReference>
<dbReference type="CDD" id="cd00773">
    <property type="entry name" value="HisRS-like_core"/>
    <property type="match status" value="1"/>
</dbReference>
<dbReference type="CDD" id="cd00859">
    <property type="entry name" value="HisRS_anticodon"/>
    <property type="match status" value="1"/>
</dbReference>
<dbReference type="FunFam" id="3.30.930.10:FF:000005">
    <property type="entry name" value="Histidine--tRNA ligase"/>
    <property type="match status" value="1"/>
</dbReference>
<dbReference type="FunFam" id="3.40.50.800:FF:000007">
    <property type="entry name" value="Histidine--tRNA ligase"/>
    <property type="match status" value="1"/>
</dbReference>
<dbReference type="Gene3D" id="3.40.50.800">
    <property type="entry name" value="Anticodon-binding domain"/>
    <property type="match status" value="1"/>
</dbReference>
<dbReference type="Gene3D" id="3.30.930.10">
    <property type="entry name" value="Bira Bifunctional Protein, Domain 2"/>
    <property type="match status" value="1"/>
</dbReference>
<dbReference type="HAMAP" id="MF_00127">
    <property type="entry name" value="His_tRNA_synth"/>
    <property type="match status" value="1"/>
</dbReference>
<dbReference type="InterPro" id="IPR006195">
    <property type="entry name" value="aa-tRNA-synth_II"/>
</dbReference>
<dbReference type="InterPro" id="IPR045864">
    <property type="entry name" value="aa-tRNA-synth_II/BPL/LPL"/>
</dbReference>
<dbReference type="InterPro" id="IPR004154">
    <property type="entry name" value="Anticodon-bd"/>
</dbReference>
<dbReference type="InterPro" id="IPR036621">
    <property type="entry name" value="Anticodon-bd_dom_sf"/>
</dbReference>
<dbReference type="InterPro" id="IPR015807">
    <property type="entry name" value="His-tRNA-ligase"/>
</dbReference>
<dbReference type="InterPro" id="IPR041715">
    <property type="entry name" value="HisRS-like_core"/>
</dbReference>
<dbReference type="InterPro" id="IPR004516">
    <property type="entry name" value="HisRS/HisZ"/>
</dbReference>
<dbReference type="InterPro" id="IPR033656">
    <property type="entry name" value="HisRS_anticodon"/>
</dbReference>
<dbReference type="NCBIfam" id="TIGR00442">
    <property type="entry name" value="hisS"/>
    <property type="match status" value="1"/>
</dbReference>
<dbReference type="PANTHER" id="PTHR43707:SF1">
    <property type="entry name" value="HISTIDINE--TRNA LIGASE, MITOCHONDRIAL-RELATED"/>
    <property type="match status" value="1"/>
</dbReference>
<dbReference type="PANTHER" id="PTHR43707">
    <property type="entry name" value="HISTIDYL-TRNA SYNTHETASE"/>
    <property type="match status" value="1"/>
</dbReference>
<dbReference type="Pfam" id="PF03129">
    <property type="entry name" value="HGTP_anticodon"/>
    <property type="match status" value="1"/>
</dbReference>
<dbReference type="Pfam" id="PF13393">
    <property type="entry name" value="tRNA-synt_His"/>
    <property type="match status" value="1"/>
</dbReference>
<dbReference type="PIRSF" id="PIRSF001549">
    <property type="entry name" value="His-tRNA_synth"/>
    <property type="match status" value="1"/>
</dbReference>
<dbReference type="SUPFAM" id="SSF52954">
    <property type="entry name" value="Class II aaRS ABD-related"/>
    <property type="match status" value="1"/>
</dbReference>
<dbReference type="SUPFAM" id="SSF55681">
    <property type="entry name" value="Class II aaRS and biotin synthetases"/>
    <property type="match status" value="1"/>
</dbReference>
<dbReference type="PROSITE" id="PS50862">
    <property type="entry name" value="AA_TRNA_LIGASE_II"/>
    <property type="match status" value="1"/>
</dbReference>
<feature type="chain" id="PRO_1000095563" description="Histidine--tRNA ligase">
    <location>
        <begin position="1"/>
        <end position="424"/>
    </location>
</feature>
<reference key="1">
    <citation type="journal article" date="2008" name="PLoS Genet.">
        <title>Complete genome sequence of the N2-fixing broad host range endophyte Klebsiella pneumoniae 342 and virulence predictions verified in mice.</title>
        <authorList>
            <person name="Fouts D.E."/>
            <person name="Tyler H.L."/>
            <person name="DeBoy R.T."/>
            <person name="Daugherty S."/>
            <person name="Ren Q."/>
            <person name="Badger J.H."/>
            <person name="Durkin A.S."/>
            <person name="Huot H."/>
            <person name="Shrivastava S."/>
            <person name="Kothari S."/>
            <person name="Dodson R.J."/>
            <person name="Mohamoud Y."/>
            <person name="Khouri H."/>
            <person name="Roesch L.F.W."/>
            <person name="Krogfelt K.A."/>
            <person name="Struve C."/>
            <person name="Triplett E.W."/>
            <person name="Methe B.A."/>
        </authorList>
    </citation>
    <scope>NUCLEOTIDE SEQUENCE [LARGE SCALE GENOMIC DNA]</scope>
    <source>
        <strain>342</strain>
    </source>
</reference>
<protein>
    <recommendedName>
        <fullName evidence="1">Histidine--tRNA ligase</fullName>
        <ecNumber evidence="1">6.1.1.21</ecNumber>
    </recommendedName>
    <alternativeName>
        <fullName evidence="1">Histidyl-tRNA synthetase</fullName>
        <shortName evidence="1">HisRS</shortName>
    </alternativeName>
</protein>
<keyword id="KW-0030">Aminoacyl-tRNA synthetase</keyword>
<keyword id="KW-0067">ATP-binding</keyword>
<keyword id="KW-0963">Cytoplasm</keyword>
<keyword id="KW-0436">Ligase</keyword>
<keyword id="KW-0547">Nucleotide-binding</keyword>
<keyword id="KW-0648">Protein biosynthesis</keyword>
<organism>
    <name type="scientific">Klebsiella pneumoniae (strain 342)</name>
    <dbReference type="NCBI Taxonomy" id="507522"/>
    <lineage>
        <taxon>Bacteria</taxon>
        <taxon>Pseudomonadati</taxon>
        <taxon>Pseudomonadota</taxon>
        <taxon>Gammaproteobacteria</taxon>
        <taxon>Enterobacterales</taxon>
        <taxon>Enterobacteriaceae</taxon>
        <taxon>Klebsiella/Raoultella group</taxon>
        <taxon>Klebsiella</taxon>
        <taxon>Klebsiella pneumoniae complex</taxon>
    </lineage>
</organism>